<sequence length="156" mass="17513">MPRRREVPKRDVLPDPKFGSVELSKFMNVVMIDGKKAVAERIVYGALAQVEKKTGKNPIEVFSTAIANAKPVVEVKSRRVGGANYQVPVEVRPARRLALAMRWLREAARKRGEKSMDLRLAGELLDAAEGRGGAMKKRDEVHRMAEANKAFSHFRF</sequence>
<reference key="1">
    <citation type="journal article" date="2009" name="PLoS Genet.">
        <title>The complete genome and proteome of Laribacter hongkongensis reveal potential mechanisms for adaptations to different temperatures and habitats.</title>
        <authorList>
            <person name="Woo P.C.Y."/>
            <person name="Lau S.K.P."/>
            <person name="Tse H."/>
            <person name="Teng J.L.L."/>
            <person name="Curreem S.O."/>
            <person name="Tsang A.K.L."/>
            <person name="Fan R.Y.Y."/>
            <person name="Wong G.K.M."/>
            <person name="Huang Y."/>
            <person name="Loman N.J."/>
            <person name="Snyder L.A.S."/>
            <person name="Cai J.J."/>
            <person name="Huang J.-D."/>
            <person name="Mak W."/>
            <person name="Pallen M.J."/>
            <person name="Lok S."/>
            <person name="Yuen K.-Y."/>
        </authorList>
    </citation>
    <scope>NUCLEOTIDE SEQUENCE [LARGE SCALE GENOMIC DNA]</scope>
    <source>
        <strain>HLHK9</strain>
    </source>
</reference>
<evidence type="ECO:0000255" key="1">
    <source>
        <dbReference type="HAMAP-Rule" id="MF_00480"/>
    </source>
</evidence>
<evidence type="ECO:0000305" key="2"/>
<proteinExistence type="inferred from homology"/>
<name>RS7_LARHH</name>
<dbReference type="EMBL" id="CP001154">
    <property type="protein sequence ID" value="ACO73244.1"/>
    <property type="molecule type" value="Genomic_DNA"/>
</dbReference>
<dbReference type="RefSeq" id="WP_012695739.1">
    <property type="nucleotide sequence ID" value="NC_012559.1"/>
</dbReference>
<dbReference type="SMR" id="C1DAR3"/>
<dbReference type="STRING" id="557598.LHK_00249"/>
<dbReference type="GeneID" id="75110369"/>
<dbReference type="KEGG" id="lhk:LHK_00249"/>
<dbReference type="eggNOG" id="COG0049">
    <property type="taxonomic scope" value="Bacteria"/>
</dbReference>
<dbReference type="HOGENOM" id="CLU_072226_1_1_4"/>
<dbReference type="Proteomes" id="UP000002010">
    <property type="component" value="Chromosome"/>
</dbReference>
<dbReference type="GO" id="GO:0015935">
    <property type="term" value="C:small ribosomal subunit"/>
    <property type="evidence" value="ECO:0007669"/>
    <property type="project" value="InterPro"/>
</dbReference>
<dbReference type="GO" id="GO:0019843">
    <property type="term" value="F:rRNA binding"/>
    <property type="evidence" value="ECO:0007669"/>
    <property type="project" value="UniProtKB-UniRule"/>
</dbReference>
<dbReference type="GO" id="GO:0003735">
    <property type="term" value="F:structural constituent of ribosome"/>
    <property type="evidence" value="ECO:0007669"/>
    <property type="project" value="InterPro"/>
</dbReference>
<dbReference type="GO" id="GO:0000049">
    <property type="term" value="F:tRNA binding"/>
    <property type="evidence" value="ECO:0007669"/>
    <property type="project" value="UniProtKB-UniRule"/>
</dbReference>
<dbReference type="GO" id="GO:0006412">
    <property type="term" value="P:translation"/>
    <property type="evidence" value="ECO:0007669"/>
    <property type="project" value="UniProtKB-UniRule"/>
</dbReference>
<dbReference type="CDD" id="cd14869">
    <property type="entry name" value="uS7_Bacteria"/>
    <property type="match status" value="1"/>
</dbReference>
<dbReference type="FunFam" id="1.10.455.10:FF:000001">
    <property type="entry name" value="30S ribosomal protein S7"/>
    <property type="match status" value="1"/>
</dbReference>
<dbReference type="Gene3D" id="1.10.455.10">
    <property type="entry name" value="Ribosomal protein S7 domain"/>
    <property type="match status" value="1"/>
</dbReference>
<dbReference type="HAMAP" id="MF_00480_B">
    <property type="entry name" value="Ribosomal_uS7_B"/>
    <property type="match status" value="1"/>
</dbReference>
<dbReference type="InterPro" id="IPR000235">
    <property type="entry name" value="Ribosomal_uS7"/>
</dbReference>
<dbReference type="InterPro" id="IPR005717">
    <property type="entry name" value="Ribosomal_uS7_bac/org-type"/>
</dbReference>
<dbReference type="InterPro" id="IPR020606">
    <property type="entry name" value="Ribosomal_uS7_CS"/>
</dbReference>
<dbReference type="InterPro" id="IPR023798">
    <property type="entry name" value="Ribosomal_uS7_dom"/>
</dbReference>
<dbReference type="InterPro" id="IPR036823">
    <property type="entry name" value="Ribosomal_uS7_dom_sf"/>
</dbReference>
<dbReference type="NCBIfam" id="TIGR01029">
    <property type="entry name" value="rpsG_bact"/>
    <property type="match status" value="1"/>
</dbReference>
<dbReference type="PANTHER" id="PTHR11205">
    <property type="entry name" value="RIBOSOMAL PROTEIN S7"/>
    <property type="match status" value="1"/>
</dbReference>
<dbReference type="Pfam" id="PF00177">
    <property type="entry name" value="Ribosomal_S7"/>
    <property type="match status" value="1"/>
</dbReference>
<dbReference type="PIRSF" id="PIRSF002122">
    <property type="entry name" value="RPS7p_RPS7a_RPS5e_RPS7o"/>
    <property type="match status" value="1"/>
</dbReference>
<dbReference type="SUPFAM" id="SSF47973">
    <property type="entry name" value="Ribosomal protein S7"/>
    <property type="match status" value="1"/>
</dbReference>
<dbReference type="PROSITE" id="PS00052">
    <property type="entry name" value="RIBOSOMAL_S7"/>
    <property type="match status" value="1"/>
</dbReference>
<protein>
    <recommendedName>
        <fullName evidence="1">Small ribosomal subunit protein uS7</fullName>
    </recommendedName>
    <alternativeName>
        <fullName evidence="2">30S ribosomal protein S7</fullName>
    </alternativeName>
</protein>
<keyword id="KW-1185">Reference proteome</keyword>
<keyword id="KW-0687">Ribonucleoprotein</keyword>
<keyword id="KW-0689">Ribosomal protein</keyword>
<keyword id="KW-0694">RNA-binding</keyword>
<keyword id="KW-0699">rRNA-binding</keyword>
<keyword id="KW-0820">tRNA-binding</keyword>
<comment type="function">
    <text evidence="1">One of the primary rRNA binding proteins, it binds directly to 16S rRNA where it nucleates assembly of the head domain of the 30S subunit. Is located at the subunit interface close to the decoding center, probably blocks exit of the E-site tRNA.</text>
</comment>
<comment type="subunit">
    <text evidence="1">Part of the 30S ribosomal subunit. Contacts proteins S9 and S11.</text>
</comment>
<comment type="similarity">
    <text evidence="1">Belongs to the universal ribosomal protein uS7 family.</text>
</comment>
<gene>
    <name evidence="1" type="primary">rpsG</name>
    <name type="ordered locus">LHK_00249</name>
</gene>
<organism>
    <name type="scientific">Laribacter hongkongensis (strain HLHK9)</name>
    <dbReference type="NCBI Taxonomy" id="557598"/>
    <lineage>
        <taxon>Bacteria</taxon>
        <taxon>Pseudomonadati</taxon>
        <taxon>Pseudomonadota</taxon>
        <taxon>Betaproteobacteria</taxon>
        <taxon>Neisseriales</taxon>
        <taxon>Aquaspirillaceae</taxon>
        <taxon>Laribacter</taxon>
    </lineage>
</organism>
<feature type="chain" id="PRO_1000135607" description="Small ribosomal subunit protein uS7">
    <location>
        <begin position="1"/>
        <end position="156"/>
    </location>
</feature>
<accession>C1DAR3</accession>